<proteinExistence type="evidence at protein level"/>
<protein>
    <recommendedName>
        <fullName>Protein ORM2</fullName>
    </recommendedName>
</protein>
<feature type="chain" id="PRO_0000215646" description="Protein ORM2">
    <location>
        <begin position="1"/>
        <end position="216"/>
    </location>
</feature>
<feature type="topological domain" description="Cytoplasmic" evidence="2">
    <location>
        <begin position="1"/>
        <end position="78"/>
    </location>
</feature>
<feature type="transmembrane region" description="Helical" evidence="2">
    <location>
        <begin position="79"/>
        <end position="99"/>
    </location>
</feature>
<feature type="topological domain" description="Extracellular" evidence="2">
    <location>
        <begin position="100"/>
        <end position="103"/>
    </location>
</feature>
<feature type="transmembrane region" description="Helical" evidence="2">
    <location>
        <begin position="104"/>
        <end position="124"/>
    </location>
</feature>
<feature type="topological domain" description="Cytoplasmic" evidence="2">
    <location>
        <begin position="125"/>
        <end position="148"/>
    </location>
</feature>
<feature type="transmembrane region" description="Helical" evidence="2">
    <location>
        <begin position="149"/>
        <end position="169"/>
    </location>
</feature>
<feature type="topological domain" description="Extracellular" evidence="2">
    <location>
        <begin position="170"/>
        <end position="177"/>
    </location>
</feature>
<feature type="transmembrane region" description="Helical" evidence="2">
    <location>
        <begin position="178"/>
        <end position="198"/>
    </location>
</feature>
<feature type="topological domain" description="Cytoplasmic" evidence="2">
    <location>
        <begin position="199"/>
        <end position="216"/>
    </location>
</feature>
<feature type="region of interest" description="Disordered" evidence="3">
    <location>
        <begin position="1"/>
        <end position="50"/>
    </location>
</feature>
<feature type="compositionally biased region" description="Polar residues" evidence="3">
    <location>
        <begin position="17"/>
        <end position="38"/>
    </location>
</feature>
<feature type="modified residue" description="Phosphoserine" evidence="10">
    <location>
        <position position="9"/>
    </location>
</feature>
<feature type="modified residue" description="Phosphoserine" evidence="10">
    <location>
        <position position="15"/>
    </location>
</feature>
<feature type="modified residue" description="Phosphothreonine" evidence="9">
    <location>
        <position position="18"/>
    </location>
</feature>
<feature type="modified residue" description="Phosphoserine" evidence="10">
    <location>
        <position position="22"/>
    </location>
</feature>
<feature type="modified residue" description="Phosphoserine" evidence="1">
    <location>
        <position position="29"/>
    </location>
</feature>
<feature type="modified residue" description="Phosphoserine" evidence="1">
    <location>
        <position position="51"/>
    </location>
</feature>
<feature type="mutagenesis site" description="Induces dysregulation of sphingolipid synthesis; when associated with A-15, A-18, A-36 and 46-A--A-48." evidence="6">
    <original>S</original>
    <variation>A</variation>
    <location>
        <position position="9"/>
    </location>
</feature>
<feature type="mutagenesis site" description="Induces dysregulation of sphingolipid synthesis; when associated with A-9, A-18, A-36 and 46-A--A-48." evidence="6">
    <original>S</original>
    <variation>A</variation>
    <location>
        <position position="15"/>
    </location>
</feature>
<feature type="mutagenesis site" description="Induces dysregulation of sphingolipid synthesis; when associated with A-9, A-15, A-36 and 46-A--A-48." evidence="6">
    <original>T</original>
    <variation>A</variation>
    <location>
        <position position="18"/>
    </location>
</feature>
<feature type="mutagenesis site" description="Induces dysregulation of sphingolipid synthesis; when associated with A-9, A-15, A-18 and 46-A--A-48." evidence="6">
    <original>T</original>
    <variation>A</variation>
    <location>
        <position position="36"/>
    </location>
</feature>
<feature type="mutagenesis site" description="Induces dysregulation of sphingolipid synthesis; when associated with A-9, A-15, A-18, and A-36." evidence="6">
    <original>SSS</original>
    <variation>AAA</variation>
    <location>
        <begin position="46"/>
        <end position="48"/>
    </location>
</feature>
<sequence length="216" mass="24855">MIDRTKNESPAFEESPLTPNVSNLKPFPSQSNKISTPVTDHRRRRSSSVISHVEQETFEDENDQQMLPNMNATWVDQRGAWLIHIVVIVLLRLFYSLFGSTPKWTWTLTNMTYIIGFYIMFHLVKGTPFDFNGGAYDNLTMWEQINDETLYTPTRKFLLIVPIVLFLISNQYYRNDMTLFLSNLAVTVLIGVVPKLGITHRLRISIPGITGRAQIS</sequence>
<comment type="function">
    <text evidence="6 7">Component of the SPOTS complex that acts as a negative regulator of sphingolipid synthesis (PubMed:39490931). Acts by inhibiting serine palmitoyltransferases (LCB1 and LCB2) activity (PubMed:20182505). Along with ORM1, plays a role in the phosphorylation of LAC1 and YPK1, the distribution of actin patches between mother and daughter cells, and in endocytosis (PubMed:39490931).</text>
</comment>
<comment type="subunit">
    <text evidence="6">Component of the SPOTS complex, at least composed of LCB1/2 (LCB1 and/or LCB2), ORM1/2 (ORM1 and/or ORM2), SAC1 and TSC3.</text>
</comment>
<comment type="interaction">
    <interactant intactId="EBI-34916">
        <id>Q06144</id>
    </interactant>
    <interactant intactId="EBI-27512">
        <id>Q05031</id>
        <label>DFG5</label>
    </interactant>
    <organismsDiffer>false</organismsDiffer>
    <experiments>3</experiments>
</comment>
<comment type="interaction">
    <interactant intactId="EBI-34916">
        <id>Q06144</id>
    </interactant>
    <interactant intactId="EBI-10059">
        <id>P25045</id>
        <label>LCB1</label>
    </interactant>
    <organismsDiffer>false</organismsDiffer>
    <experiments>7</experiments>
</comment>
<comment type="interaction">
    <interactant intactId="EBI-34916">
        <id>Q06144</id>
    </interactant>
    <interactant intactId="EBI-12592">
        <id>P53224</id>
        <label>ORM1</label>
    </interactant>
    <organismsDiffer>false</organismsDiffer>
    <experiments>6</experiments>
</comment>
<comment type="interaction">
    <interactant intactId="EBI-34916">
        <id>Q06144</id>
    </interactant>
    <interactant intactId="EBI-34916">
        <id>Q06144</id>
        <label>ORM2</label>
    </interactant>
    <organismsDiffer>false</organismsDiffer>
    <experiments>4</experiments>
</comment>
<comment type="subcellular location">
    <subcellularLocation>
        <location evidence="4 6">Endoplasmic reticulum membrane</location>
        <topology evidence="4 6">Multi-pass membrane protein</topology>
    </subcellularLocation>
</comment>
<comment type="PTM">
    <text evidence="6">Phosphorylated in case of disruption of sphingolipid synthesis (PubMed:20182505). Phosphorylation regulates the inhibitory activity of serine palmitoyltransferases (LCB1 and LCB2) (PubMed:20182505).</text>
</comment>
<comment type="disruption phenotype">
    <text evidence="7">Double knockout of ORM1 and ORM2 exhibits defect in ceramide synthesis, increasing the level of total sphingolipids and causing phytosphingosine and dihydrosphingosine to accumulate; the accumulation of phytosphingosine reduces the phosphorylation of both YPK1 and LAC1 (PubMed:39490931). The mutant also exhibits random distribution of actin patches between mother and daughter cells, and shows a defect in endocytosis (PubMed:39490931). Defects are rescued by YPK2 A-239 mutation or TSC3 deletion in ORM1 and ORM2 double knockout mutant background (PubMed:39490931).</text>
</comment>
<comment type="miscellaneous">
    <text evidence="5">Present with 5240 molecules/cell in log phase SD medium.</text>
</comment>
<comment type="similarity">
    <text evidence="8">Belongs to the ORM family.</text>
</comment>
<gene>
    <name type="primary">ORM2</name>
    <name type="ordered locus">YLR350W</name>
</gene>
<reference key="1">
    <citation type="journal article" date="1997" name="Nature">
        <title>The nucleotide sequence of Saccharomyces cerevisiae chromosome XII.</title>
        <authorList>
            <person name="Johnston M."/>
            <person name="Hillier L.W."/>
            <person name="Riles L."/>
            <person name="Albermann K."/>
            <person name="Andre B."/>
            <person name="Ansorge W."/>
            <person name="Benes V."/>
            <person name="Brueckner M."/>
            <person name="Delius H."/>
            <person name="Dubois E."/>
            <person name="Duesterhoeft A."/>
            <person name="Entian K.-D."/>
            <person name="Floeth M."/>
            <person name="Goffeau A."/>
            <person name="Hebling U."/>
            <person name="Heumann K."/>
            <person name="Heuss-Neitzel D."/>
            <person name="Hilbert H."/>
            <person name="Hilger F."/>
            <person name="Kleine K."/>
            <person name="Koetter P."/>
            <person name="Louis E.J."/>
            <person name="Messenguy F."/>
            <person name="Mewes H.-W."/>
            <person name="Miosga T."/>
            <person name="Moestl D."/>
            <person name="Mueller-Auer S."/>
            <person name="Nentwich U."/>
            <person name="Obermaier B."/>
            <person name="Piravandi E."/>
            <person name="Pohl T.M."/>
            <person name="Portetelle D."/>
            <person name="Purnelle B."/>
            <person name="Rechmann S."/>
            <person name="Rieger M."/>
            <person name="Rinke M."/>
            <person name="Rose M."/>
            <person name="Scharfe M."/>
            <person name="Scherens B."/>
            <person name="Scholler P."/>
            <person name="Schwager C."/>
            <person name="Schwarz S."/>
            <person name="Underwood A.P."/>
            <person name="Urrestarazu L.A."/>
            <person name="Vandenbol M."/>
            <person name="Verhasselt P."/>
            <person name="Vierendeels F."/>
            <person name="Voet M."/>
            <person name="Volckaert G."/>
            <person name="Voss H."/>
            <person name="Wambutt R."/>
            <person name="Wedler E."/>
            <person name="Wedler H."/>
            <person name="Zimmermann F.K."/>
            <person name="Zollner A."/>
            <person name="Hani J."/>
            <person name="Hoheisel J.D."/>
        </authorList>
    </citation>
    <scope>NUCLEOTIDE SEQUENCE [LARGE SCALE GENOMIC DNA]</scope>
    <source>
        <strain>ATCC 204508 / S288c</strain>
    </source>
</reference>
<reference key="2">
    <citation type="journal article" date="2014" name="G3 (Bethesda)">
        <title>The reference genome sequence of Saccharomyces cerevisiae: Then and now.</title>
        <authorList>
            <person name="Engel S.R."/>
            <person name="Dietrich F.S."/>
            <person name="Fisk D.G."/>
            <person name="Binkley G."/>
            <person name="Balakrishnan R."/>
            <person name="Costanzo M.C."/>
            <person name="Dwight S.S."/>
            <person name="Hitz B.C."/>
            <person name="Karra K."/>
            <person name="Nash R.S."/>
            <person name="Weng S."/>
            <person name="Wong E.D."/>
            <person name="Lloyd P."/>
            <person name="Skrzypek M.S."/>
            <person name="Miyasato S.R."/>
            <person name="Simison M."/>
            <person name="Cherry J.M."/>
        </authorList>
    </citation>
    <scope>GENOME REANNOTATION</scope>
    <source>
        <strain>ATCC 204508 / S288c</strain>
    </source>
</reference>
<reference key="3">
    <citation type="journal article" date="2007" name="Genome Res.">
        <title>Approaching a complete repository of sequence-verified protein-encoding clones for Saccharomyces cerevisiae.</title>
        <authorList>
            <person name="Hu Y."/>
            <person name="Rolfs A."/>
            <person name="Bhullar B."/>
            <person name="Murthy T.V.S."/>
            <person name="Zhu C."/>
            <person name="Berger M.F."/>
            <person name="Camargo A.A."/>
            <person name="Kelley F."/>
            <person name="McCarron S."/>
            <person name="Jepson D."/>
            <person name="Richardson A."/>
            <person name="Raphael J."/>
            <person name="Moreira D."/>
            <person name="Taycher E."/>
            <person name="Zuo D."/>
            <person name="Mohr S."/>
            <person name="Kane M.F."/>
            <person name="Williamson J."/>
            <person name="Simpson A.J.G."/>
            <person name="Bulyk M.L."/>
            <person name="Harlow E."/>
            <person name="Marsischky G."/>
            <person name="Kolodner R.D."/>
            <person name="LaBaer J."/>
        </authorList>
    </citation>
    <scope>NUCLEOTIDE SEQUENCE [GENOMIC DNA]</scope>
    <source>
        <strain>ATCC 204508 / S288c</strain>
    </source>
</reference>
<reference key="4">
    <citation type="journal article" date="2002" name="Genome Biol.">
        <title>ORMDL proteins are a conserved new family of endoplasmic reticulum membrane proteins.</title>
        <authorList>
            <person name="Hjelmqvist L."/>
            <person name="Tuson M."/>
            <person name="Marfany G."/>
            <person name="Herrero E."/>
            <person name="Balcells S."/>
            <person name="Gonzalez-Duarte R."/>
        </authorList>
    </citation>
    <scope>NOMENCLATURE</scope>
</reference>
<reference key="5">
    <citation type="journal article" date="2003" name="Nature">
        <title>Global analysis of protein localization in budding yeast.</title>
        <authorList>
            <person name="Huh W.-K."/>
            <person name="Falvo J.V."/>
            <person name="Gerke L.C."/>
            <person name="Carroll A.S."/>
            <person name="Howson R.W."/>
            <person name="Weissman J.S."/>
            <person name="O'Shea E.K."/>
        </authorList>
    </citation>
    <scope>SUBCELLULAR LOCATION [LARGE SCALE ANALYSIS]</scope>
</reference>
<reference key="6">
    <citation type="journal article" date="2003" name="Nature">
        <title>Global analysis of protein expression in yeast.</title>
        <authorList>
            <person name="Ghaemmaghami S."/>
            <person name="Huh W.-K."/>
            <person name="Bower K."/>
            <person name="Howson R.W."/>
            <person name="Belle A."/>
            <person name="Dephoure N."/>
            <person name="O'Shea E.K."/>
            <person name="Weissman J.S."/>
        </authorList>
    </citation>
    <scope>LEVEL OF PROTEIN EXPRESSION [LARGE SCALE ANALYSIS]</scope>
</reference>
<reference key="7">
    <citation type="journal article" date="2006" name="Proc. Natl. Acad. Sci. U.S.A.">
        <title>A global topology map of the Saccharomyces cerevisiae membrane proteome.</title>
        <authorList>
            <person name="Kim H."/>
            <person name="Melen K."/>
            <person name="Oesterberg M."/>
            <person name="von Heijne G."/>
        </authorList>
    </citation>
    <scope>TOPOLOGY [LARGE SCALE ANALYSIS]</scope>
    <source>
        <strain>ATCC 208353 / W303-1A</strain>
    </source>
</reference>
<reference key="8">
    <citation type="journal article" date="2007" name="J. Proteome Res.">
        <title>Large-scale phosphorylation analysis of alpha-factor-arrested Saccharomyces cerevisiae.</title>
        <authorList>
            <person name="Li X."/>
            <person name="Gerber S.A."/>
            <person name="Rudner A.D."/>
            <person name="Beausoleil S.A."/>
            <person name="Haas W."/>
            <person name="Villen J."/>
            <person name="Elias J.E."/>
            <person name="Gygi S.P."/>
        </authorList>
    </citation>
    <scope>PHOSPHORYLATION [LARGE SCALE ANALYSIS] AT THR-18</scope>
    <scope>IDENTIFICATION BY MASS SPECTROMETRY [LARGE SCALE ANALYSIS]</scope>
    <source>
        <strain>ADR376</strain>
    </source>
</reference>
<reference key="9">
    <citation type="journal article" date="2008" name="Mol. Cell. Proteomics">
        <title>A multidimensional chromatography technology for in-depth phosphoproteome analysis.</title>
        <authorList>
            <person name="Albuquerque C.P."/>
            <person name="Smolka M.B."/>
            <person name="Payne S.H."/>
            <person name="Bafna V."/>
            <person name="Eng J."/>
            <person name="Zhou H."/>
        </authorList>
    </citation>
    <scope>IDENTIFICATION BY MASS SPECTROMETRY [LARGE SCALE ANALYSIS]</scope>
</reference>
<reference key="10">
    <citation type="journal article" date="2009" name="Science">
        <title>Global analysis of Cdk1 substrate phosphorylation sites provides insights into evolution.</title>
        <authorList>
            <person name="Holt L.J."/>
            <person name="Tuch B.B."/>
            <person name="Villen J."/>
            <person name="Johnson A.D."/>
            <person name="Gygi S.P."/>
            <person name="Morgan D.O."/>
        </authorList>
    </citation>
    <scope>PHOSPHORYLATION [LARGE SCALE ANALYSIS] AT SER-9; SER-15 AND SER-22</scope>
    <scope>IDENTIFICATION BY MASS SPECTROMETRY [LARGE SCALE ANALYSIS]</scope>
</reference>
<reference key="11">
    <citation type="journal article" date="2010" name="Nature">
        <title>Orm family proteins mediate sphingolipid homeostasis.</title>
        <authorList>
            <person name="Breslow D.K."/>
            <person name="Collins S.R."/>
            <person name="Bodenmiller B."/>
            <person name="Aebersold R."/>
            <person name="Simons K."/>
            <person name="Shevchenko A."/>
            <person name="Ejsing C.S."/>
            <person name="Weissman J.S."/>
        </authorList>
    </citation>
    <scope>FUNCTION</scope>
    <scope>PHOSPHORYLATION</scope>
    <scope>SUBCELLULAR LOCATION</scope>
    <scope>IDENTIFICATION IN THE SPOTS COMPLEX</scope>
    <scope>MUTAGENESIS OF SER-9; SER-15; THR-18; THR-36 AND 46-SER--SER-48</scope>
</reference>
<reference evidence="8" key="12">
    <citation type="journal article" date="2024" name="J. Lipid Res.">
        <title>Orm proteins control ceramide synthesis and endocytosis via LCB-mediated Ypk1 regulation.</title>
        <authorList>
            <person name="Ren J."/>
            <person name="Rieger R."/>
            <person name="Pereira de Sa N."/>
            <person name="Kelapire D."/>
            <person name="Del Poeta M."/>
            <person name="Hannun Y.A."/>
        </authorList>
    </citation>
    <scope>FUNCTION</scope>
    <scope>DISRUPTION PHENOTYPE</scope>
</reference>
<accession>Q06144</accession>
<accession>D6VYY8</accession>
<evidence type="ECO:0000250" key="1">
    <source>
        <dbReference type="UniProtKB" id="P53224"/>
    </source>
</evidence>
<evidence type="ECO:0000255" key="2"/>
<evidence type="ECO:0000256" key="3">
    <source>
        <dbReference type="SAM" id="MobiDB-lite"/>
    </source>
</evidence>
<evidence type="ECO:0000269" key="4">
    <source>
    </source>
</evidence>
<evidence type="ECO:0000269" key="5">
    <source>
    </source>
</evidence>
<evidence type="ECO:0000269" key="6">
    <source>
    </source>
</evidence>
<evidence type="ECO:0000269" key="7">
    <source>
    </source>
</evidence>
<evidence type="ECO:0000305" key="8"/>
<evidence type="ECO:0007744" key="9">
    <source>
    </source>
</evidence>
<evidence type="ECO:0007744" key="10">
    <source>
    </source>
</evidence>
<organism>
    <name type="scientific">Saccharomyces cerevisiae (strain ATCC 204508 / S288c)</name>
    <name type="common">Baker's yeast</name>
    <dbReference type="NCBI Taxonomy" id="559292"/>
    <lineage>
        <taxon>Eukaryota</taxon>
        <taxon>Fungi</taxon>
        <taxon>Dikarya</taxon>
        <taxon>Ascomycota</taxon>
        <taxon>Saccharomycotina</taxon>
        <taxon>Saccharomycetes</taxon>
        <taxon>Saccharomycetales</taxon>
        <taxon>Saccharomycetaceae</taxon>
        <taxon>Saccharomyces</taxon>
    </lineage>
</organism>
<keyword id="KW-0002">3D-structure</keyword>
<keyword id="KW-0254">Endocytosis</keyword>
<keyword id="KW-0256">Endoplasmic reticulum</keyword>
<keyword id="KW-0443">Lipid metabolism</keyword>
<keyword id="KW-0472">Membrane</keyword>
<keyword id="KW-0597">Phosphoprotein</keyword>
<keyword id="KW-1185">Reference proteome</keyword>
<keyword id="KW-0746">Sphingolipid metabolism</keyword>
<keyword id="KW-0812">Transmembrane</keyword>
<keyword id="KW-1133">Transmembrane helix</keyword>
<name>ORM2_YEAST</name>
<dbReference type="EMBL" id="U19028">
    <property type="protein sequence ID" value="AAB67252.1"/>
    <property type="molecule type" value="Genomic_DNA"/>
</dbReference>
<dbReference type="EMBL" id="AY692908">
    <property type="protein sequence ID" value="AAT92927.1"/>
    <property type="molecule type" value="Genomic_DNA"/>
</dbReference>
<dbReference type="EMBL" id="BK006945">
    <property type="protein sequence ID" value="DAA09654.1"/>
    <property type="molecule type" value="Genomic_DNA"/>
</dbReference>
<dbReference type="PIR" id="S51352">
    <property type="entry name" value="S51352"/>
</dbReference>
<dbReference type="RefSeq" id="NP_013454.1">
    <property type="nucleotide sequence ID" value="NM_001182239.1"/>
</dbReference>
<dbReference type="PDB" id="8IAJ">
    <property type="method" value="EM"/>
    <property type="resolution" value="3.10 A"/>
    <property type="chains" value="D/H=1-216"/>
</dbReference>
<dbReference type="PDB" id="8IAK">
    <property type="method" value="EM"/>
    <property type="resolution" value="3.10 A"/>
    <property type="chains" value="D/H=1-216"/>
</dbReference>
<dbReference type="PDB" id="8IAM">
    <property type="method" value="EM"/>
    <property type="resolution" value="3.10 A"/>
    <property type="chains" value="D/H=1-216"/>
</dbReference>
<dbReference type="PDBsum" id="8IAJ"/>
<dbReference type="PDBsum" id="8IAK"/>
<dbReference type="PDBsum" id="8IAM"/>
<dbReference type="EMDB" id="EMD-35304"/>
<dbReference type="EMDB" id="EMD-35306"/>
<dbReference type="EMDB" id="EMD-35310"/>
<dbReference type="SMR" id="Q06144"/>
<dbReference type="BioGRID" id="31612">
    <property type="interactions" value="560"/>
</dbReference>
<dbReference type="ComplexPortal" id="CPX-3158">
    <property type="entry name" value="SPOTS complex"/>
</dbReference>
<dbReference type="DIP" id="DIP-5579N"/>
<dbReference type="FunCoup" id="Q06144">
    <property type="interactions" value="481"/>
</dbReference>
<dbReference type="IntAct" id="Q06144">
    <property type="interactions" value="45"/>
</dbReference>
<dbReference type="MINT" id="Q06144"/>
<dbReference type="STRING" id="4932.YLR350W"/>
<dbReference type="iPTMnet" id="Q06144"/>
<dbReference type="PaxDb" id="4932-YLR350W"/>
<dbReference type="PeptideAtlas" id="Q06144"/>
<dbReference type="TopDownProteomics" id="Q06144"/>
<dbReference type="EnsemblFungi" id="YLR350W_mRNA">
    <property type="protein sequence ID" value="YLR350W"/>
    <property type="gene ID" value="YLR350W"/>
</dbReference>
<dbReference type="GeneID" id="851064"/>
<dbReference type="KEGG" id="sce:YLR350W"/>
<dbReference type="AGR" id="SGD:S000004342"/>
<dbReference type="SGD" id="S000004342">
    <property type="gene designation" value="ORM2"/>
</dbReference>
<dbReference type="VEuPathDB" id="FungiDB:YLR350W"/>
<dbReference type="eggNOG" id="KOG3319">
    <property type="taxonomic scope" value="Eukaryota"/>
</dbReference>
<dbReference type="GeneTree" id="ENSGT00950000183178"/>
<dbReference type="HOGENOM" id="CLU_072117_2_1_1"/>
<dbReference type="InParanoid" id="Q06144"/>
<dbReference type="OMA" id="WTAYILI"/>
<dbReference type="OrthoDB" id="1932233at2759"/>
<dbReference type="BioCyc" id="YEAST:G3O-32425-MONOMER"/>
<dbReference type="Reactome" id="R-SCE-6798695">
    <property type="pathway name" value="Neutrophil degranulation"/>
</dbReference>
<dbReference type="BioGRID-ORCS" id="851064">
    <property type="hits" value="7 hits in 10 CRISPR screens"/>
</dbReference>
<dbReference type="PRO" id="PR:Q06144"/>
<dbReference type="Proteomes" id="UP000002311">
    <property type="component" value="Chromosome XII"/>
</dbReference>
<dbReference type="RNAct" id="Q06144">
    <property type="molecule type" value="protein"/>
</dbReference>
<dbReference type="GO" id="GO:0005783">
    <property type="term" value="C:endoplasmic reticulum"/>
    <property type="evidence" value="ECO:0000314"/>
    <property type="project" value="UniProtKB"/>
</dbReference>
<dbReference type="GO" id="GO:0005789">
    <property type="term" value="C:endoplasmic reticulum membrane"/>
    <property type="evidence" value="ECO:0007669"/>
    <property type="project" value="UniProtKB-SubCell"/>
</dbReference>
<dbReference type="GO" id="GO:0017059">
    <property type="term" value="C:serine palmitoyltransferase complex"/>
    <property type="evidence" value="ECO:0000314"/>
    <property type="project" value="UniProtKB"/>
</dbReference>
<dbReference type="GO" id="GO:0042802">
    <property type="term" value="F:identical protein binding"/>
    <property type="evidence" value="ECO:0000353"/>
    <property type="project" value="IntAct"/>
</dbReference>
<dbReference type="GO" id="GO:0006672">
    <property type="term" value="P:ceramide metabolic process"/>
    <property type="evidence" value="ECO:0000318"/>
    <property type="project" value="GO_Central"/>
</dbReference>
<dbReference type="GO" id="GO:0090156">
    <property type="term" value="P:intracellular sphingolipid homeostasis"/>
    <property type="evidence" value="ECO:0000315"/>
    <property type="project" value="UniProtKB"/>
</dbReference>
<dbReference type="GO" id="GO:0090155">
    <property type="term" value="P:negative regulation of sphingolipid biosynthetic process"/>
    <property type="evidence" value="ECO:0000315"/>
    <property type="project" value="UniProtKB"/>
</dbReference>
<dbReference type="GO" id="GO:0006986">
    <property type="term" value="P:response to unfolded protein"/>
    <property type="evidence" value="ECO:0000315"/>
    <property type="project" value="SGD"/>
</dbReference>
<dbReference type="GO" id="GO:0030148">
    <property type="term" value="P:sphingolipid biosynthetic process"/>
    <property type="evidence" value="ECO:0000318"/>
    <property type="project" value="GO_Central"/>
</dbReference>
<dbReference type="InterPro" id="IPR007203">
    <property type="entry name" value="ORMDL"/>
</dbReference>
<dbReference type="PANTHER" id="PTHR12665">
    <property type="entry name" value="ORMDL PROTEINS"/>
    <property type="match status" value="1"/>
</dbReference>
<dbReference type="Pfam" id="PF04061">
    <property type="entry name" value="ORMDL"/>
    <property type="match status" value="1"/>
</dbReference>
<dbReference type="PIRSF" id="PIRSF018147">
    <property type="entry name" value="ORMDL"/>
    <property type="match status" value="1"/>
</dbReference>